<sequence>MTTSSPSQVRQNYHQDSEAAINRQINLELYASYVYLSMSYYFDRDDVALKNFAKYFLHQSHEEREHAEKLMKLQNQRGGRIFLQDIKKPDRDDWESGLNAMECALHLEKNVNQSLLELHKLATDKNDPHLCDFIETHYLDEQVKAIKQLGDHVTNLRKMGAPDSGMAEYLFDKHTLGDSDNES</sequence>
<gene>
    <name type="primary">FTH1</name>
    <name type="synonym">FTH</name>
</gene>
<reference key="1">
    <citation type="journal article" date="1999" name="Biochim. Biophys. Acta">
        <title>Cloning and expression of the transferrin and ferritin genes in a marsupial, the brushtail possum (Trichosurus vulpecula).</title>
        <authorList>
            <person name="Demmer J."/>
            <person name="Stasiuk S.J."/>
            <person name="Adamski F.M."/>
            <person name="Grigor M.R."/>
        </authorList>
    </citation>
    <scope>NUCLEOTIDE SEQUENCE [MRNA]</scope>
    <source>
        <tissue>Lactating mammary gland</tissue>
    </source>
</reference>
<name>FRIH_TRIVU</name>
<accession>Q9XT73</accession>
<feature type="chain" id="PRO_0000424478" description="Ferritin heavy chain">
    <location>
        <begin position="1"/>
        <end position="183"/>
    </location>
</feature>
<feature type="initiator methionine" description="Removed; alternate" evidence="1">
    <location>
        <position position="1"/>
    </location>
</feature>
<feature type="chain" id="PRO_0000201055" description="Ferritin heavy chain, N-terminally processed">
    <location>
        <begin position="2"/>
        <end position="183"/>
    </location>
</feature>
<feature type="domain" description="Ferritin-like diiron" evidence="4">
    <location>
        <begin position="11"/>
        <end position="160"/>
    </location>
</feature>
<feature type="binding site" evidence="4">
    <location>
        <position position="28"/>
    </location>
    <ligand>
        <name>Fe cation</name>
        <dbReference type="ChEBI" id="CHEBI:24875"/>
        <label>1</label>
    </ligand>
</feature>
<feature type="binding site" evidence="4">
    <location>
        <position position="63"/>
    </location>
    <ligand>
        <name>Fe cation</name>
        <dbReference type="ChEBI" id="CHEBI:24875"/>
        <label>1</label>
    </ligand>
</feature>
<feature type="binding site" evidence="4">
    <location>
        <position position="63"/>
    </location>
    <ligand>
        <name>Fe cation</name>
        <dbReference type="ChEBI" id="CHEBI:24875"/>
        <label>2</label>
    </ligand>
</feature>
<feature type="binding site" evidence="4">
    <location>
        <position position="66"/>
    </location>
    <ligand>
        <name>Fe cation</name>
        <dbReference type="ChEBI" id="CHEBI:24875"/>
        <label>1</label>
    </ligand>
</feature>
<feature type="binding site" evidence="4">
    <location>
        <position position="108"/>
    </location>
    <ligand>
        <name>Fe cation</name>
        <dbReference type="ChEBI" id="CHEBI:24875"/>
        <label>2</label>
    </ligand>
</feature>
<feature type="binding site" evidence="4">
    <location>
        <position position="142"/>
    </location>
    <ligand>
        <name>Fe cation</name>
        <dbReference type="ChEBI" id="CHEBI:24875"/>
        <label>2</label>
    </ligand>
</feature>
<feature type="modified residue" description="N-acetylmethionine" evidence="1">
    <location>
        <position position="1"/>
    </location>
</feature>
<feature type="modified residue" description="N-acetylthreonine; in Ferritin heavy chain, N-terminally processed" evidence="1">
    <location>
        <position position="2"/>
    </location>
</feature>
<feature type="modified residue" description="Phosphoserine" evidence="1">
    <location>
        <position position="179"/>
    </location>
</feature>
<feature type="modified residue" description="Phosphoserine" evidence="1">
    <location>
        <position position="183"/>
    </location>
</feature>
<organism>
    <name type="scientific">Trichosurus vulpecula</name>
    <name type="common">Brush-tailed possum</name>
    <dbReference type="NCBI Taxonomy" id="9337"/>
    <lineage>
        <taxon>Eukaryota</taxon>
        <taxon>Metazoa</taxon>
        <taxon>Chordata</taxon>
        <taxon>Craniata</taxon>
        <taxon>Vertebrata</taxon>
        <taxon>Euteleostomi</taxon>
        <taxon>Mammalia</taxon>
        <taxon>Metatheria</taxon>
        <taxon>Diprotodontia</taxon>
        <taxon>Phalangeridae</taxon>
        <taxon>Trichosurus</taxon>
    </lineage>
</organism>
<comment type="function">
    <text evidence="1 2">Stores iron in a soluble, non-toxic, readily available form (By similarity). Important for iron homeostasis (By similarity). Has ferroxidase activity (By similarity). Iron is taken up in the ferrous form and deposited as ferric hydroxides after oxidation (By similarity). Also plays a role in delivery of iron to cells (By similarity). Mediates iron uptake in capsule cells of the developing kidney (By similarity). Delivery to lysosomes is mediated by the cargo receptor NCOA4 for autophagic degradation and release of iron (By similarity).</text>
</comment>
<comment type="catalytic activity">
    <reaction evidence="1">
        <text>4 Fe(2+) + O2 + 4 H(+) = 4 Fe(3+) + 2 H2O</text>
        <dbReference type="Rhea" id="RHEA:11148"/>
        <dbReference type="ChEBI" id="CHEBI:15377"/>
        <dbReference type="ChEBI" id="CHEBI:15378"/>
        <dbReference type="ChEBI" id="CHEBI:15379"/>
        <dbReference type="ChEBI" id="CHEBI:29033"/>
        <dbReference type="ChEBI" id="CHEBI:29034"/>
        <dbReference type="EC" id="1.16.3.1"/>
    </reaction>
</comment>
<comment type="subunit">
    <text evidence="1 2">Oligomer of 24 subunits. There are two types of subunits: L (light) chain and H (heavy) chain. The major chain can be light or heavy, depending on the species and tissue type. The functional molecule forms a roughly spherical shell with a diameter of 12 nm and contains a central cavity into which the insoluble mineral iron core is deposited. Interacts with NCOA4; NCOA4 promotes targeting of the iron-binding ferritin complex to autolysosomes following starvation or iron depletion (By similarity).</text>
</comment>
<comment type="subcellular location">
    <subcellularLocation>
        <location evidence="3">Cytoplasm</location>
    </subcellularLocation>
    <subcellularLocation>
        <location evidence="1">Lysosome</location>
    </subcellularLocation>
    <subcellularLocation>
        <location evidence="1">Cytoplasmic vesicle</location>
        <location evidence="1">Autophagosome</location>
    </subcellularLocation>
</comment>
<comment type="tissue specificity">
    <text>Ubiquitous.</text>
</comment>
<comment type="similarity">
    <text evidence="5">Belongs to the ferritin family.</text>
</comment>
<proteinExistence type="evidence at transcript level"/>
<keyword id="KW-0007">Acetylation</keyword>
<keyword id="KW-0963">Cytoplasm</keyword>
<keyword id="KW-0968">Cytoplasmic vesicle</keyword>
<keyword id="KW-0408">Iron</keyword>
<keyword id="KW-0409">Iron storage</keyword>
<keyword id="KW-0458">Lysosome</keyword>
<keyword id="KW-0479">Metal-binding</keyword>
<keyword id="KW-0560">Oxidoreductase</keyword>
<keyword id="KW-0597">Phosphoprotein</keyword>
<protein>
    <recommendedName>
        <fullName>Ferritin heavy chain</fullName>
        <shortName>Ferritin H subunit</shortName>
        <ecNumber evidence="1">1.16.3.1</ecNumber>
    </recommendedName>
    <component>
        <recommendedName>
            <fullName>Ferritin heavy chain, N-terminally processed</fullName>
        </recommendedName>
    </component>
</protein>
<dbReference type="EC" id="1.16.3.1" evidence="1"/>
<dbReference type="EMBL" id="AF092509">
    <property type="protein sequence ID" value="AAD38330.1"/>
    <property type="molecule type" value="mRNA"/>
</dbReference>
<dbReference type="RefSeq" id="XP_036619883.1">
    <property type="nucleotide sequence ID" value="XM_036763988.1"/>
</dbReference>
<dbReference type="SMR" id="Q9XT73"/>
<dbReference type="GeneID" id="118853786"/>
<dbReference type="OrthoDB" id="9434725at2759"/>
<dbReference type="GO" id="GO:0005776">
    <property type="term" value="C:autophagosome"/>
    <property type="evidence" value="ECO:0007669"/>
    <property type="project" value="UniProtKB-SubCell"/>
</dbReference>
<dbReference type="GO" id="GO:0031410">
    <property type="term" value="C:cytoplasmic vesicle"/>
    <property type="evidence" value="ECO:0007669"/>
    <property type="project" value="UniProtKB-KW"/>
</dbReference>
<dbReference type="GO" id="GO:0005764">
    <property type="term" value="C:lysosome"/>
    <property type="evidence" value="ECO:0007669"/>
    <property type="project" value="UniProtKB-SubCell"/>
</dbReference>
<dbReference type="GO" id="GO:0008199">
    <property type="term" value="F:ferric iron binding"/>
    <property type="evidence" value="ECO:0007669"/>
    <property type="project" value="InterPro"/>
</dbReference>
<dbReference type="GO" id="GO:0008198">
    <property type="term" value="F:ferrous iron binding"/>
    <property type="evidence" value="ECO:0007669"/>
    <property type="project" value="TreeGrafter"/>
</dbReference>
<dbReference type="GO" id="GO:0004322">
    <property type="term" value="F:ferroxidase activity"/>
    <property type="evidence" value="ECO:0007669"/>
    <property type="project" value="UniProtKB-EC"/>
</dbReference>
<dbReference type="GO" id="GO:0006955">
    <property type="term" value="P:immune response"/>
    <property type="evidence" value="ECO:0000250"/>
    <property type="project" value="UniProtKB"/>
</dbReference>
<dbReference type="GO" id="GO:0006879">
    <property type="term" value="P:intracellular iron ion homeostasis"/>
    <property type="evidence" value="ECO:0007669"/>
    <property type="project" value="UniProtKB-KW"/>
</dbReference>
<dbReference type="GO" id="GO:0006826">
    <property type="term" value="P:iron ion transport"/>
    <property type="evidence" value="ECO:0007669"/>
    <property type="project" value="InterPro"/>
</dbReference>
<dbReference type="GO" id="GO:0008285">
    <property type="term" value="P:negative regulation of cell population proliferation"/>
    <property type="evidence" value="ECO:0000250"/>
    <property type="project" value="UniProtKB"/>
</dbReference>
<dbReference type="GO" id="GO:0110076">
    <property type="term" value="P:negative regulation of ferroptosis"/>
    <property type="evidence" value="ECO:0000250"/>
    <property type="project" value="UniProtKB"/>
</dbReference>
<dbReference type="CDD" id="cd01056">
    <property type="entry name" value="Euk_Ferritin"/>
    <property type="match status" value="1"/>
</dbReference>
<dbReference type="FunFam" id="1.20.1260.10:FF:000016">
    <property type="entry name" value="Ferritin heavy chain"/>
    <property type="match status" value="1"/>
</dbReference>
<dbReference type="Gene3D" id="1.20.1260.10">
    <property type="match status" value="1"/>
</dbReference>
<dbReference type="InterPro" id="IPR001519">
    <property type="entry name" value="Ferritin"/>
</dbReference>
<dbReference type="InterPro" id="IPR012347">
    <property type="entry name" value="Ferritin-like"/>
</dbReference>
<dbReference type="InterPro" id="IPR009040">
    <property type="entry name" value="Ferritin-like_diiron"/>
</dbReference>
<dbReference type="InterPro" id="IPR009078">
    <property type="entry name" value="Ferritin-like_SF"/>
</dbReference>
<dbReference type="InterPro" id="IPR014034">
    <property type="entry name" value="Ferritin_CS"/>
</dbReference>
<dbReference type="InterPro" id="IPR008331">
    <property type="entry name" value="Ferritin_DPS_dom"/>
</dbReference>
<dbReference type="PANTHER" id="PTHR11431">
    <property type="entry name" value="FERRITIN"/>
    <property type="match status" value="1"/>
</dbReference>
<dbReference type="PANTHER" id="PTHR11431:SF37">
    <property type="entry name" value="FERRITIN HEAVY CHAIN"/>
    <property type="match status" value="1"/>
</dbReference>
<dbReference type="Pfam" id="PF00210">
    <property type="entry name" value="Ferritin"/>
    <property type="match status" value="1"/>
</dbReference>
<dbReference type="SUPFAM" id="SSF47240">
    <property type="entry name" value="Ferritin-like"/>
    <property type="match status" value="1"/>
</dbReference>
<dbReference type="PROSITE" id="PS00540">
    <property type="entry name" value="FERRITIN_1"/>
    <property type="match status" value="1"/>
</dbReference>
<dbReference type="PROSITE" id="PS00204">
    <property type="entry name" value="FERRITIN_2"/>
    <property type="match status" value="1"/>
</dbReference>
<dbReference type="PROSITE" id="PS50905">
    <property type="entry name" value="FERRITIN_LIKE"/>
    <property type="match status" value="1"/>
</dbReference>
<evidence type="ECO:0000250" key="1">
    <source>
        <dbReference type="UniProtKB" id="P02794"/>
    </source>
</evidence>
<evidence type="ECO:0000250" key="2">
    <source>
        <dbReference type="UniProtKB" id="P09528"/>
    </source>
</evidence>
<evidence type="ECO:0000250" key="3">
    <source>
        <dbReference type="UniProtKB" id="P19130"/>
    </source>
</evidence>
<evidence type="ECO:0000255" key="4">
    <source>
        <dbReference type="PROSITE-ProRule" id="PRU00085"/>
    </source>
</evidence>
<evidence type="ECO:0000305" key="5"/>